<protein>
    <recommendedName>
        <fullName>Uncharacterized protein KIAA1143 homolog</fullName>
    </recommendedName>
</protein>
<accession>Q5RKH3</accession>
<evidence type="ECO:0000250" key="1">
    <source>
        <dbReference type="UniProtKB" id="Q96AT1"/>
    </source>
</evidence>
<evidence type="ECO:0000256" key="2">
    <source>
        <dbReference type="SAM" id="MobiDB-lite"/>
    </source>
</evidence>
<evidence type="ECO:0007744" key="3">
    <source>
    </source>
</evidence>
<dbReference type="EMBL" id="BC085913">
    <property type="protein sequence ID" value="AAH85913.1"/>
    <property type="molecule type" value="mRNA"/>
</dbReference>
<dbReference type="RefSeq" id="NP_001008330.1">
    <property type="nucleotide sequence ID" value="NM_001008329.1"/>
</dbReference>
<dbReference type="FunCoup" id="Q5RKH3">
    <property type="interactions" value="3079"/>
</dbReference>
<dbReference type="GlyGen" id="Q5RKH3">
    <property type="glycosylation" value="1 site"/>
</dbReference>
<dbReference type="iPTMnet" id="Q5RKH3"/>
<dbReference type="PhosphoSitePlus" id="Q5RKH3"/>
<dbReference type="PaxDb" id="10116-ENSRNOP00000005502"/>
<dbReference type="GeneID" id="301079"/>
<dbReference type="KEGG" id="rno:301079"/>
<dbReference type="UCSC" id="RGD:1311745">
    <property type="organism name" value="rat"/>
</dbReference>
<dbReference type="AGR" id="RGD:1311745"/>
<dbReference type="CTD" id="301079"/>
<dbReference type="RGD" id="1311745">
    <property type="gene designation" value="RGD1311745"/>
</dbReference>
<dbReference type="VEuPathDB" id="HostDB:ENSRNOG00000004135"/>
<dbReference type="eggNOG" id="ENOG502S2KJ">
    <property type="taxonomic scope" value="Eukaryota"/>
</dbReference>
<dbReference type="HOGENOM" id="CLU_111288_0_1_1"/>
<dbReference type="InParanoid" id="Q5RKH3"/>
<dbReference type="OrthoDB" id="82820at9989"/>
<dbReference type="PhylomeDB" id="Q5RKH3"/>
<dbReference type="TreeFam" id="TF313955"/>
<dbReference type="PRO" id="PR:Q5RKH3"/>
<dbReference type="Proteomes" id="UP000002494">
    <property type="component" value="Chromosome 8"/>
</dbReference>
<dbReference type="Bgee" id="ENSRNOG00000004135">
    <property type="expression patterns" value="Expressed in testis and 20 other cell types or tissues"/>
</dbReference>
<dbReference type="ExpressionAtlas" id="Q5RKH3">
    <property type="expression patterns" value="baseline and differential"/>
</dbReference>
<dbReference type="InterPro" id="IPR027911">
    <property type="entry name" value="DUF4604"/>
</dbReference>
<dbReference type="InterPro" id="IPR040219">
    <property type="entry name" value="KIAA1143-like"/>
</dbReference>
<dbReference type="PANTHER" id="PTHR31195">
    <property type="entry name" value="GEO02494P1"/>
    <property type="match status" value="1"/>
</dbReference>
<dbReference type="PANTHER" id="PTHR31195:SF2">
    <property type="entry name" value="GEO02494P1"/>
    <property type="match status" value="1"/>
</dbReference>
<dbReference type="Pfam" id="PF15377">
    <property type="entry name" value="DUF4604"/>
    <property type="match status" value="1"/>
</dbReference>
<name>K1143_RAT</name>
<proteinExistence type="evidence at protein level"/>
<feature type="chain" id="PRO_0000248340" description="Uncharacterized protein KIAA1143 homolog">
    <location>
        <begin position="1"/>
        <end position="155"/>
    </location>
</feature>
<feature type="region of interest" description="Disordered" evidence="2">
    <location>
        <begin position="24"/>
        <end position="63"/>
    </location>
</feature>
<feature type="region of interest" description="Disordered" evidence="2">
    <location>
        <begin position="80"/>
        <end position="155"/>
    </location>
</feature>
<feature type="compositionally biased region" description="Acidic residues" evidence="2">
    <location>
        <begin position="43"/>
        <end position="56"/>
    </location>
</feature>
<feature type="compositionally biased region" description="Polar residues" evidence="2">
    <location>
        <begin position="128"/>
        <end position="147"/>
    </location>
</feature>
<feature type="modified residue" description="Phosphoserine" evidence="3">
    <location>
        <position position="50"/>
    </location>
</feature>
<feature type="modified residue" description="N6-acetyllysine" evidence="1">
    <location>
        <position position="108"/>
    </location>
</feature>
<feature type="modified residue" description="Phosphoserine" evidence="3">
    <location>
        <position position="130"/>
    </location>
</feature>
<feature type="modified residue" description="Phosphoserine" evidence="1">
    <location>
        <position position="147"/>
    </location>
</feature>
<feature type="modified residue" description="Phosphoserine" evidence="3">
    <location>
        <position position="150"/>
    </location>
</feature>
<keyword id="KW-0007">Acetylation</keyword>
<keyword id="KW-0597">Phosphoprotein</keyword>
<keyword id="KW-1185">Reference proteome</keyword>
<organism>
    <name type="scientific">Rattus norvegicus</name>
    <name type="common">Rat</name>
    <dbReference type="NCBI Taxonomy" id="10116"/>
    <lineage>
        <taxon>Eukaryota</taxon>
        <taxon>Metazoa</taxon>
        <taxon>Chordata</taxon>
        <taxon>Craniata</taxon>
        <taxon>Vertebrata</taxon>
        <taxon>Euteleostomi</taxon>
        <taxon>Mammalia</taxon>
        <taxon>Eutheria</taxon>
        <taxon>Euarchontoglires</taxon>
        <taxon>Glires</taxon>
        <taxon>Rodentia</taxon>
        <taxon>Myomorpha</taxon>
        <taxon>Muroidea</taxon>
        <taxon>Muridae</taxon>
        <taxon>Murinae</taxon>
        <taxon>Rattus</taxon>
    </lineage>
</organism>
<sequence>MSKRNQVSYVRPAEPAFLSRFKERVGYREGPTVETKKIQPQLPDEDGNESDKEDEQPQVVVLKKGDLTAEEVMKIKAEIKAAKADEEPPPADGRIMYRKPVKRSSDEKCSGLTASSKKKKTNEDDVNKQSPVRKNSQKQIKNSSLLSFGSEDENE</sequence>
<reference key="1">
    <citation type="journal article" date="2004" name="Genome Res.">
        <title>The status, quality, and expansion of the NIH full-length cDNA project: the Mammalian Gene Collection (MGC).</title>
        <authorList>
            <consortium name="The MGC Project Team"/>
        </authorList>
    </citation>
    <scope>NUCLEOTIDE SEQUENCE [LARGE SCALE MRNA]</scope>
    <source>
        <tissue>Kidney</tissue>
    </source>
</reference>
<reference key="2">
    <citation type="journal article" date="2012" name="Nat. Commun.">
        <title>Quantitative maps of protein phosphorylation sites across 14 different rat organs and tissues.</title>
        <authorList>
            <person name="Lundby A."/>
            <person name="Secher A."/>
            <person name="Lage K."/>
            <person name="Nordsborg N.B."/>
            <person name="Dmytriyev A."/>
            <person name="Lundby C."/>
            <person name="Olsen J.V."/>
        </authorList>
    </citation>
    <scope>PHOSPHORYLATION [LARGE SCALE ANALYSIS] AT SER-50; SER-130 AND SER-150</scope>
    <scope>IDENTIFICATION BY MASS SPECTROMETRY [LARGE SCALE ANALYSIS]</scope>
</reference>